<feature type="chain" id="PRO_0000064178" description="Peptidylprolyl isomerase cyp7">
    <location>
        <begin position="1"/>
        <end position="463"/>
    </location>
</feature>
<feature type="domain" description="PPIase cyclophilin-type" evidence="2">
    <location>
        <begin position="11"/>
        <end position="166"/>
    </location>
</feature>
<feature type="region of interest" description="Disordered" evidence="3">
    <location>
        <begin position="224"/>
        <end position="275"/>
    </location>
</feature>
<feature type="compositionally biased region" description="Polar residues" evidence="3">
    <location>
        <begin position="232"/>
        <end position="243"/>
    </location>
</feature>
<feature type="compositionally biased region" description="Low complexity" evidence="3">
    <location>
        <begin position="250"/>
        <end position="261"/>
    </location>
</feature>
<feature type="compositionally biased region" description="Polar residues" evidence="3">
    <location>
        <begin position="262"/>
        <end position="271"/>
    </location>
</feature>
<name>CYP7_SCHPO</name>
<accession>O42941</accession>
<sequence length="463" mass="52174">MATLTNLEPLATGTVILKTTRGDIQIELWCKEVPKACRNFIQLCLEGYYDGTIVHRVVPEFLIQGGDPTGTGMGGESIYGEPFAVETHPRLRFIRRGLVGMACTENEGNNSQFFITLGPTPEWNGKQTLFGRVVGDTIYNVVRISELELDANQRPVFPPKIISTEVIDNYFTDIKPRSTKEEREKIANELAHQEKQKERNKLLKSGRRNKAVLSFGDEVDMPIVKKPLRQKTPVSRSSDTTTELSKDLISSSSSIHSTYSSAQTGLTSAKVSSDEYARQVDTLDTKLNSSSKSKVQEEISRLKSELRDLEKSGGSSNSKPVVVRPKKRNILTEELEKYKKSKKVVLGKRKNLENDEESTLRALSSFQSKIRNAEDEDVMDSQYGSKIEDTPCSLHNVPGCFSCFDRLGEKNITETNSNWFAHRLVAENDPTRRTEELRIQRAEELKDVPSARPKKLLMKRDII</sequence>
<evidence type="ECO:0000250" key="1"/>
<evidence type="ECO:0000255" key="2">
    <source>
        <dbReference type="PROSITE-ProRule" id="PRU00156"/>
    </source>
</evidence>
<evidence type="ECO:0000256" key="3">
    <source>
        <dbReference type="SAM" id="MobiDB-lite"/>
    </source>
</evidence>
<evidence type="ECO:0000269" key="4">
    <source>
    </source>
</evidence>
<evidence type="ECO:0000305" key="5"/>
<organism>
    <name type="scientific">Schizosaccharomyces pombe (strain 972 / ATCC 24843)</name>
    <name type="common">Fission yeast</name>
    <dbReference type="NCBI Taxonomy" id="284812"/>
    <lineage>
        <taxon>Eukaryota</taxon>
        <taxon>Fungi</taxon>
        <taxon>Dikarya</taxon>
        <taxon>Ascomycota</taxon>
        <taxon>Taphrinomycotina</taxon>
        <taxon>Schizosaccharomycetes</taxon>
        <taxon>Schizosaccharomycetales</taxon>
        <taxon>Schizosaccharomycetaceae</taxon>
        <taxon>Schizosaccharomyces</taxon>
    </lineage>
</organism>
<protein>
    <recommendedName>
        <fullName>Peptidylprolyl isomerase cyp7</fullName>
        <shortName>PPIase cyp7</shortName>
        <ecNumber>5.2.1.8</ecNumber>
    </recommendedName>
    <alternativeName>
        <fullName>Complexed with cdc5 protein 27</fullName>
    </alternativeName>
    <alternativeName>
        <fullName>Cyclophilin 7</fullName>
    </alternativeName>
    <alternativeName>
        <fullName>Rotamase cyp7</fullName>
    </alternativeName>
</protein>
<gene>
    <name type="primary">cyp7</name>
    <name type="synonym">cwf27</name>
    <name type="ORF">SPBC16H5.05c</name>
</gene>
<keyword id="KW-0963">Cytoplasm</keyword>
<keyword id="KW-0413">Isomerase</keyword>
<keyword id="KW-0507">mRNA processing</keyword>
<keyword id="KW-0508">mRNA splicing</keyword>
<keyword id="KW-0539">Nucleus</keyword>
<keyword id="KW-1185">Reference proteome</keyword>
<keyword id="KW-0697">Rotamase</keyword>
<keyword id="KW-0747">Spliceosome</keyword>
<reference key="1">
    <citation type="journal article" date="2002" name="Nature">
        <title>The genome sequence of Schizosaccharomyces pombe.</title>
        <authorList>
            <person name="Wood V."/>
            <person name="Gwilliam R."/>
            <person name="Rajandream M.A."/>
            <person name="Lyne M.H."/>
            <person name="Lyne R."/>
            <person name="Stewart A."/>
            <person name="Sgouros J.G."/>
            <person name="Peat N."/>
            <person name="Hayles J."/>
            <person name="Baker S.G."/>
            <person name="Basham D."/>
            <person name="Bowman S."/>
            <person name="Brooks K."/>
            <person name="Brown D."/>
            <person name="Brown S."/>
            <person name="Chillingworth T."/>
            <person name="Churcher C.M."/>
            <person name="Collins M."/>
            <person name="Connor R."/>
            <person name="Cronin A."/>
            <person name="Davis P."/>
            <person name="Feltwell T."/>
            <person name="Fraser A."/>
            <person name="Gentles S."/>
            <person name="Goble A."/>
            <person name="Hamlin N."/>
            <person name="Harris D.E."/>
            <person name="Hidalgo J."/>
            <person name="Hodgson G."/>
            <person name="Holroyd S."/>
            <person name="Hornsby T."/>
            <person name="Howarth S."/>
            <person name="Huckle E.J."/>
            <person name="Hunt S."/>
            <person name="Jagels K."/>
            <person name="James K.D."/>
            <person name="Jones L."/>
            <person name="Jones M."/>
            <person name="Leather S."/>
            <person name="McDonald S."/>
            <person name="McLean J."/>
            <person name="Mooney P."/>
            <person name="Moule S."/>
            <person name="Mungall K.L."/>
            <person name="Murphy L.D."/>
            <person name="Niblett D."/>
            <person name="Odell C."/>
            <person name="Oliver K."/>
            <person name="O'Neil S."/>
            <person name="Pearson D."/>
            <person name="Quail M.A."/>
            <person name="Rabbinowitsch E."/>
            <person name="Rutherford K.M."/>
            <person name="Rutter S."/>
            <person name="Saunders D."/>
            <person name="Seeger K."/>
            <person name="Sharp S."/>
            <person name="Skelton J."/>
            <person name="Simmonds M.N."/>
            <person name="Squares R."/>
            <person name="Squares S."/>
            <person name="Stevens K."/>
            <person name="Taylor K."/>
            <person name="Taylor R.G."/>
            <person name="Tivey A."/>
            <person name="Walsh S.V."/>
            <person name="Warren T."/>
            <person name="Whitehead S."/>
            <person name="Woodward J.R."/>
            <person name="Volckaert G."/>
            <person name="Aert R."/>
            <person name="Robben J."/>
            <person name="Grymonprez B."/>
            <person name="Weltjens I."/>
            <person name="Vanstreels E."/>
            <person name="Rieger M."/>
            <person name="Schaefer M."/>
            <person name="Mueller-Auer S."/>
            <person name="Gabel C."/>
            <person name="Fuchs M."/>
            <person name="Duesterhoeft A."/>
            <person name="Fritzc C."/>
            <person name="Holzer E."/>
            <person name="Moestl D."/>
            <person name="Hilbert H."/>
            <person name="Borzym K."/>
            <person name="Langer I."/>
            <person name="Beck A."/>
            <person name="Lehrach H."/>
            <person name="Reinhardt R."/>
            <person name="Pohl T.M."/>
            <person name="Eger P."/>
            <person name="Zimmermann W."/>
            <person name="Wedler H."/>
            <person name="Wambutt R."/>
            <person name="Purnelle B."/>
            <person name="Goffeau A."/>
            <person name="Cadieu E."/>
            <person name="Dreano S."/>
            <person name="Gloux S."/>
            <person name="Lelaure V."/>
            <person name="Mottier S."/>
            <person name="Galibert F."/>
            <person name="Aves S.J."/>
            <person name="Xiang Z."/>
            <person name="Hunt C."/>
            <person name="Moore K."/>
            <person name="Hurst S.M."/>
            <person name="Lucas M."/>
            <person name="Rochet M."/>
            <person name="Gaillardin C."/>
            <person name="Tallada V.A."/>
            <person name="Garzon A."/>
            <person name="Thode G."/>
            <person name="Daga R.R."/>
            <person name="Cruzado L."/>
            <person name="Jimenez J."/>
            <person name="Sanchez M."/>
            <person name="del Rey F."/>
            <person name="Benito J."/>
            <person name="Dominguez A."/>
            <person name="Revuelta J.L."/>
            <person name="Moreno S."/>
            <person name="Armstrong J."/>
            <person name="Forsburg S.L."/>
            <person name="Cerutti L."/>
            <person name="Lowe T."/>
            <person name="McCombie W.R."/>
            <person name="Paulsen I."/>
            <person name="Potashkin J."/>
            <person name="Shpakovski G.V."/>
            <person name="Ussery D."/>
            <person name="Barrell B.G."/>
            <person name="Nurse P."/>
        </authorList>
    </citation>
    <scope>NUCLEOTIDE SEQUENCE [LARGE SCALE GENOMIC DNA]</scope>
    <source>
        <strain>972 / ATCC 24843</strain>
    </source>
</reference>
<reference key="2">
    <citation type="journal article" date="2002" name="Mol. Cell. Biol.">
        <title>Proteomics analysis reveals stable multiprotein complexes in both fission and budding yeasts containing Myb-related Cdc5p/Cef1p, novel pre-mRNA splicing factors, and snRNAs.</title>
        <authorList>
            <person name="Ohi M.D."/>
            <person name="Link A.J."/>
            <person name="Ren L."/>
            <person name="Jennings J.L."/>
            <person name="McDonald W.H."/>
            <person name="Gould K.L."/>
        </authorList>
    </citation>
    <scope>IDENTIFICATION IN THE CWF COMPLEX</scope>
    <scope>IDENTIFICATION BY MASS SPECTROMETRY</scope>
</reference>
<comment type="function">
    <text>PPIases accelerate the folding of proteins. Catalyzes the cis-trans isomerization of proline imidic peptide bonds in oligopeptides. Involved in pre-mRNA splicing.</text>
</comment>
<comment type="catalytic activity">
    <reaction>
        <text>[protein]-peptidylproline (omega=180) = [protein]-peptidylproline (omega=0)</text>
        <dbReference type="Rhea" id="RHEA:16237"/>
        <dbReference type="Rhea" id="RHEA-COMP:10747"/>
        <dbReference type="Rhea" id="RHEA-COMP:10748"/>
        <dbReference type="ChEBI" id="CHEBI:83833"/>
        <dbReference type="ChEBI" id="CHEBI:83834"/>
        <dbReference type="EC" id="5.2.1.8"/>
    </reaction>
</comment>
<comment type="subunit">
    <text evidence="4">Belongs to the 40S cdc5-associated complex (or cwf complex), a spliceosome sub-complex reminiscent of a late-stage spliceosome composed of the U2, U5 and U6 snRNAs and at least brr2, cdc5, cwf2/prp3, cwf3/syf1, cwf4/syf3, cwf5/ecm2, spp42/cwf6, cwf7/spf27, cwf8, cwf9, cwf10, cwf11, cwf12, prp45/cwf13, cwf14, cwf15, cwf16, cwf17, cwf18, cwf19, cwf20, cwf21, cwf22, cwf23, cwf24, cwf25, cwf26, cyp7/cwf27, cwf28, cwf29/ist3, lea1, msl1, prp5/cwf1, prp10, prp12/sap130, prp17, prp22, sap61, sap62, sap114, sap145, slu7, smb1, smd1, smd3, smf1, smg1 and syf2.</text>
</comment>
<comment type="subcellular location">
    <subcellularLocation>
        <location evidence="1">Cytoplasm</location>
    </subcellularLocation>
    <subcellularLocation>
        <location evidence="1">Nucleus</location>
    </subcellularLocation>
</comment>
<comment type="similarity">
    <text evidence="5">Belongs to the cyclophilin-type PPIase family. CWC27 subfamily.</text>
</comment>
<proteinExistence type="evidence at protein level"/>
<dbReference type="EC" id="5.2.1.8"/>
<dbReference type="EMBL" id="CU329671">
    <property type="protein sequence ID" value="CAA17903.1"/>
    <property type="molecule type" value="Genomic_DNA"/>
</dbReference>
<dbReference type="PIR" id="T39621">
    <property type="entry name" value="T39621"/>
</dbReference>
<dbReference type="RefSeq" id="NP_595943.1">
    <property type="nucleotide sequence ID" value="NM_001021851.2"/>
</dbReference>
<dbReference type="SMR" id="O42941"/>
<dbReference type="BioGRID" id="276605">
    <property type="interactions" value="38"/>
</dbReference>
<dbReference type="FunCoup" id="O42941">
    <property type="interactions" value="375"/>
</dbReference>
<dbReference type="IntAct" id="O42941">
    <property type="interactions" value="1"/>
</dbReference>
<dbReference type="STRING" id="284812.O42941"/>
<dbReference type="iPTMnet" id="O42941"/>
<dbReference type="PaxDb" id="4896-SPBC16H5.05c.1"/>
<dbReference type="EnsemblFungi" id="SPBC16H5.05c.1">
    <property type="protein sequence ID" value="SPBC16H5.05c.1:pep"/>
    <property type="gene ID" value="SPBC16H5.05c"/>
</dbReference>
<dbReference type="PomBase" id="SPBC16H5.05c">
    <property type="gene designation" value="cyp7"/>
</dbReference>
<dbReference type="VEuPathDB" id="FungiDB:SPBC16H5.05c"/>
<dbReference type="eggNOG" id="KOG0885">
    <property type="taxonomic scope" value="Eukaryota"/>
</dbReference>
<dbReference type="HOGENOM" id="CLU_012062_14_5_1"/>
<dbReference type="InParanoid" id="O42941"/>
<dbReference type="OMA" id="CKNFLQH"/>
<dbReference type="PhylomeDB" id="O42941"/>
<dbReference type="PRO" id="PR:O42941"/>
<dbReference type="Proteomes" id="UP000002485">
    <property type="component" value="Chromosome II"/>
</dbReference>
<dbReference type="GO" id="GO:0071013">
    <property type="term" value="C:catalytic step 2 spliceosome"/>
    <property type="evidence" value="ECO:0000318"/>
    <property type="project" value="GO_Central"/>
</dbReference>
<dbReference type="GO" id="GO:0005737">
    <property type="term" value="C:cytoplasm"/>
    <property type="evidence" value="ECO:0007669"/>
    <property type="project" value="UniProtKB-SubCell"/>
</dbReference>
<dbReference type="GO" id="GO:0005684">
    <property type="term" value="C:U2-type spliceosomal complex"/>
    <property type="evidence" value="ECO:0000266"/>
    <property type="project" value="PomBase"/>
</dbReference>
<dbReference type="GO" id="GO:0003755">
    <property type="term" value="F:peptidyl-prolyl cis-trans isomerase activity"/>
    <property type="evidence" value="ECO:0000255"/>
    <property type="project" value="PomBase"/>
</dbReference>
<dbReference type="GO" id="GO:0006397">
    <property type="term" value="P:mRNA processing"/>
    <property type="evidence" value="ECO:0007669"/>
    <property type="project" value="UniProtKB-KW"/>
</dbReference>
<dbReference type="GO" id="GO:0006457">
    <property type="term" value="P:protein folding"/>
    <property type="evidence" value="ECO:0000318"/>
    <property type="project" value="GO_Central"/>
</dbReference>
<dbReference type="GO" id="GO:0008380">
    <property type="term" value="P:RNA splicing"/>
    <property type="evidence" value="ECO:0007669"/>
    <property type="project" value="UniProtKB-KW"/>
</dbReference>
<dbReference type="CDD" id="cd01925">
    <property type="entry name" value="cyclophilin_CeCYP16-like"/>
    <property type="match status" value="1"/>
</dbReference>
<dbReference type="Gene3D" id="2.40.100.10">
    <property type="entry name" value="Cyclophilin-like"/>
    <property type="match status" value="1"/>
</dbReference>
<dbReference type="InterPro" id="IPR029000">
    <property type="entry name" value="Cyclophilin-like_dom_sf"/>
</dbReference>
<dbReference type="InterPro" id="IPR020892">
    <property type="entry name" value="Cyclophilin-type_PPIase_CS"/>
</dbReference>
<dbReference type="InterPro" id="IPR002130">
    <property type="entry name" value="Cyclophilin-type_PPIase_dom"/>
</dbReference>
<dbReference type="InterPro" id="IPR044666">
    <property type="entry name" value="Cyclophilin_A-like"/>
</dbReference>
<dbReference type="PANTHER" id="PTHR45625">
    <property type="entry name" value="PEPTIDYL-PROLYL CIS-TRANS ISOMERASE-RELATED"/>
    <property type="match status" value="1"/>
</dbReference>
<dbReference type="PANTHER" id="PTHR45625:SF6">
    <property type="entry name" value="SPLICEOSOME-ASSOCIATED PROTEIN CWC27 HOMOLOG"/>
    <property type="match status" value="1"/>
</dbReference>
<dbReference type="Pfam" id="PF00160">
    <property type="entry name" value="Pro_isomerase"/>
    <property type="match status" value="1"/>
</dbReference>
<dbReference type="PRINTS" id="PR00153">
    <property type="entry name" value="CSAPPISMRASE"/>
</dbReference>
<dbReference type="SUPFAM" id="SSF50891">
    <property type="entry name" value="Cyclophilin-like"/>
    <property type="match status" value="1"/>
</dbReference>
<dbReference type="PROSITE" id="PS00170">
    <property type="entry name" value="CSA_PPIASE_1"/>
    <property type="match status" value="1"/>
</dbReference>
<dbReference type="PROSITE" id="PS50072">
    <property type="entry name" value="CSA_PPIASE_2"/>
    <property type="match status" value="1"/>
</dbReference>